<dbReference type="EMBL" id="AE016823">
    <property type="protein sequence ID" value="AAS71265.1"/>
    <property type="molecule type" value="Genomic_DNA"/>
</dbReference>
<dbReference type="SMR" id="Q72NX1"/>
<dbReference type="KEGG" id="lic:LIC_12707"/>
<dbReference type="HOGENOM" id="CLU_132594_0_0_12"/>
<dbReference type="Proteomes" id="UP000007037">
    <property type="component" value="Chromosome I"/>
</dbReference>
<dbReference type="GO" id="GO:0005829">
    <property type="term" value="C:cytosol"/>
    <property type="evidence" value="ECO:0007669"/>
    <property type="project" value="TreeGrafter"/>
</dbReference>
<dbReference type="GO" id="GO:0000028">
    <property type="term" value="P:ribosomal small subunit assembly"/>
    <property type="evidence" value="ECO:0007669"/>
    <property type="project" value="TreeGrafter"/>
</dbReference>
<dbReference type="GO" id="GO:0006412">
    <property type="term" value="P:translation"/>
    <property type="evidence" value="ECO:0007669"/>
    <property type="project" value="TreeGrafter"/>
</dbReference>
<dbReference type="Gene3D" id="3.30.300.70">
    <property type="entry name" value="RimP-like superfamily, N-terminal"/>
    <property type="match status" value="1"/>
</dbReference>
<dbReference type="HAMAP" id="MF_01077">
    <property type="entry name" value="RimP"/>
    <property type="match status" value="1"/>
</dbReference>
<dbReference type="InterPro" id="IPR003728">
    <property type="entry name" value="Ribosome_maturation_RimP"/>
</dbReference>
<dbReference type="InterPro" id="IPR028989">
    <property type="entry name" value="RimP_N"/>
</dbReference>
<dbReference type="InterPro" id="IPR035956">
    <property type="entry name" value="RimP_N_sf"/>
</dbReference>
<dbReference type="NCBIfam" id="NF011228">
    <property type="entry name" value="PRK14635.1"/>
    <property type="match status" value="1"/>
</dbReference>
<dbReference type="PANTHER" id="PTHR33867">
    <property type="entry name" value="RIBOSOME MATURATION FACTOR RIMP"/>
    <property type="match status" value="1"/>
</dbReference>
<dbReference type="PANTHER" id="PTHR33867:SF1">
    <property type="entry name" value="RIBOSOME MATURATION FACTOR RIMP"/>
    <property type="match status" value="1"/>
</dbReference>
<dbReference type="Pfam" id="PF02576">
    <property type="entry name" value="RimP_N"/>
    <property type="match status" value="1"/>
</dbReference>
<dbReference type="SUPFAM" id="SSF75420">
    <property type="entry name" value="YhbC-like, N-terminal domain"/>
    <property type="match status" value="1"/>
</dbReference>
<keyword id="KW-0963">Cytoplasm</keyword>
<keyword id="KW-0690">Ribosome biogenesis</keyword>
<organism>
    <name type="scientific">Leptospira interrogans serogroup Icterohaemorrhagiae serovar copenhageni (strain Fiocruz L1-130)</name>
    <dbReference type="NCBI Taxonomy" id="267671"/>
    <lineage>
        <taxon>Bacteria</taxon>
        <taxon>Pseudomonadati</taxon>
        <taxon>Spirochaetota</taxon>
        <taxon>Spirochaetia</taxon>
        <taxon>Leptospirales</taxon>
        <taxon>Leptospiraceae</taxon>
        <taxon>Leptospira</taxon>
    </lineage>
</organism>
<proteinExistence type="inferred from homology"/>
<sequence length="162" mass="18362">MTVSSEEISGILDGVLSLPVKLYSLKVNQRPNHSLIEVVLDNLEHPYGSVSLLECEQVSRKLKEELERISPDLDYTLKVSSAGAERKLNLPGDLDRFRGIPIRLVFRSEESEKEQEGIFRVVNRDGDQIVLEKFQKGKKSVVKKQTTLNLKDILKGNLYVNI</sequence>
<evidence type="ECO:0000255" key="1">
    <source>
        <dbReference type="HAMAP-Rule" id="MF_01077"/>
    </source>
</evidence>
<gene>
    <name evidence="1" type="primary">rimP</name>
    <name type="ordered locus">LIC_12707</name>
</gene>
<comment type="function">
    <text evidence="1">Required for maturation of 30S ribosomal subunits.</text>
</comment>
<comment type="subcellular location">
    <subcellularLocation>
        <location evidence="1">Cytoplasm</location>
    </subcellularLocation>
</comment>
<comment type="similarity">
    <text evidence="1">Belongs to the RimP family.</text>
</comment>
<name>RIMP_LEPIC</name>
<protein>
    <recommendedName>
        <fullName evidence="1">Ribosome maturation factor RimP</fullName>
    </recommendedName>
</protein>
<accession>Q72NX1</accession>
<reference key="1">
    <citation type="journal article" date="2004" name="J. Bacteriol.">
        <title>Comparative genomics of two Leptospira interrogans serovars reveals novel insights into physiology and pathogenesis.</title>
        <authorList>
            <person name="Nascimento A.L.T.O."/>
            <person name="Ko A.I."/>
            <person name="Martins E.A.L."/>
            <person name="Monteiro-Vitorello C.B."/>
            <person name="Ho P.L."/>
            <person name="Haake D.A."/>
            <person name="Verjovski-Almeida S."/>
            <person name="Hartskeerl R.A."/>
            <person name="Marques M.V."/>
            <person name="Oliveira M.C."/>
            <person name="Menck C.F.M."/>
            <person name="Leite L.C.C."/>
            <person name="Carrer H."/>
            <person name="Coutinho L.L."/>
            <person name="Degrave W.M."/>
            <person name="Dellagostin O.A."/>
            <person name="El-Dorry H."/>
            <person name="Ferro E.S."/>
            <person name="Ferro M.I.T."/>
            <person name="Furlan L.R."/>
            <person name="Gamberini M."/>
            <person name="Giglioti E.A."/>
            <person name="Goes-Neto A."/>
            <person name="Goldman G.H."/>
            <person name="Goldman M.H.S."/>
            <person name="Harakava R."/>
            <person name="Jeronimo S.M.B."/>
            <person name="Junqueira-de-Azevedo I.L.M."/>
            <person name="Kimura E.T."/>
            <person name="Kuramae E.E."/>
            <person name="Lemos E.G.M."/>
            <person name="Lemos M.V.F."/>
            <person name="Marino C.L."/>
            <person name="Nunes L.R."/>
            <person name="de Oliveira R.C."/>
            <person name="Pereira G.G."/>
            <person name="Reis M.S."/>
            <person name="Schriefer A."/>
            <person name="Siqueira W.J."/>
            <person name="Sommer P."/>
            <person name="Tsai S.M."/>
            <person name="Simpson A.J.G."/>
            <person name="Ferro J.A."/>
            <person name="Camargo L.E.A."/>
            <person name="Kitajima J.P."/>
            <person name="Setubal J.C."/>
            <person name="Van Sluys M.A."/>
        </authorList>
    </citation>
    <scope>NUCLEOTIDE SEQUENCE [LARGE SCALE GENOMIC DNA]</scope>
    <source>
        <strain>Fiocruz L1-130</strain>
    </source>
</reference>
<feature type="chain" id="PRO_0000181883" description="Ribosome maturation factor RimP">
    <location>
        <begin position="1"/>
        <end position="162"/>
    </location>
</feature>